<feature type="chain" id="PRO_0000451859" description="CD-NTase/cGAS isopeptidase">
    <location>
        <begin position="1"/>
        <end position="156"/>
    </location>
</feature>
<feature type="domain" description="MPN" evidence="1">
    <location>
        <begin position="16"/>
        <end position="156"/>
    </location>
</feature>
<feature type="short sequence motif" description="JAMM motif" evidence="1">
    <location>
        <begin position="101"/>
        <end position="114"/>
    </location>
</feature>
<feature type="active site" description="Proton donor/acceptor" evidence="13">
    <location>
        <position position="39"/>
    </location>
</feature>
<feature type="binding site" evidence="1">
    <location>
        <position position="101"/>
    </location>
    <ligand>
        <name>Zn(2+)</name>
        <dbReference type="ChEBI" id="CHEBI:29105"/>
        <note>catalytic</note>
    </ligand>
</feature>
<feature type="binding site" evidence="1">
    <location>
        <position position="103"/>
    </location>
    <ligand>
        <name>Zn(2+)</name>
        <dbReference type="ChEBI" id="CHEBI:29105"/>
        <note>catalytic</note>
    </ligand>
</feature>
<feature type="binding site" evidence="1">
    <location>
        <position position="114"/>
    </location>
    <ligand>
        <name>Zn(2+)</name>
        <dbReference type="ChEBI" id="CHEBI:29105"/>
        <note>catalytic</note>
    </ligand>
</feature>
<feature type="mutagenesis site" description="Increased conjugation of DncV to cellular proteins, still protects against phages P1, T2, T6, reduction in protection against T5." evidence="5">
    <original>E</original>
    <variation>A</variation>
    <location>
        <position position="39"/>
    </location>
</feature>
<feature type="mutagenesis site" description="Overexpression of this protein no longer decreases CBASS efficacy, does not cleave DncV-GFP fusion protein." evidence="4">
    <original>HTH</original>
    <variation>ATA</variation>
    <location>
        <begin position="101"/>
        <end position="103"/>
    </location>
</feature>
<organism>
    <name type="scientific">Vibrio cholerae serotype O1 (strain ATCC 39315 / El Tor Inaba N16961)</name>
    <dbReference type="NCBI Taxonomy" id="243277"/>
    <lineage>
        <taxon>Bacteria</taxon>
        <taxon>Pseudomonadati</taxon>
        <taxon>Pseudomonadota</taxon>
        <taxon>Gammaproteobacteria</taxon>
        <taxon>Vibrionales</taxon>
        <taxon>Vibrionaceae</taxon>
        <taxon>Vibrio</taxon>
    </lineage>
</organism>
<accession>Q9KVG5</accession>
<proteinExistence type="evidence at protein level"/>
<dbReference type="EC" id="3.4.-.-" evidence="4 14"/>
<dbReference type="EMBL" id="AE003852">
    <property type="protein sequence ID" value="AAF93357.1"/>
    <property type="molecule type" value="Genomic_DNA"/>
</dbReference>
<dbReference type="PIR" id="H82354">
    <property type="entry name" value="H82354"/>
</dbReference>
<dbReference type="RefSeq" id="NP_229838.1">
    <property type="nucleotide sequence ID" value="NC_002505.1"/>
</dbReference>
<dbReference type="SMR" id="Q9KVG5"/>
<dbReference type="STRING" id="243277.VC_0181"/>
<dbReference type="DNASU" id="2614172"/>
<dbReference type="EnsemblBacteria" id="AAF93357">
    <property type="protein sequence ID" value="AAF93357"/>
    <property type="gene ID" value="VC_0181"/>
</dbReference>
<dbReference type="KEGG" id="vch:VC_0181"/>
<dbReference type="eggNOG" id="COG1310">
    <property type="taxonomic scope" value="Bacteria"/>
</dbReference>
<dbReference type="HOGENOM" id="CLU_123228_1_0_6"/>
<dbReference type="Proteomes" id="UP000000584">
    <property type="component" value="Chromosome 1"/>
</dbReference>
<dbReference type="GO" id="GO:0046872">
    <property type="term" value="F:metal ion binding"/>
    <property type="evidence" value="ECO:0007669"/>
    <property type="project" value="UniProtKB-KW"/>
</dbReference>
<dbReference type="GO" id="GO:0008237">
    <property type="term" value="F:metallopeptidase activity"/>
    <property type="evidence" value="ECO:0007669"/>
    <property type="project" value="UniProtKB-KW"/>
</dbReference>
<dbReference type="GO" id="GO:0051607">
    <property type="term" value="P:defense response to virus"/>
    <property type="evidence" value="ECO:0007669"/>
    <property type="project" value="UniProtKB-KW"/>
</dbReference>
<dbReference type="GO" id="GO:0006508">
    <property type="term" value="P:proteolysis"/>
    <property type="evidence" value="ECO:0007669"/>
    <property type="project" value="UniProtKB-KW"/>
</dbReference>
<dbReference type="Gene3D" id="3.40.140.10">
    <property type="entry name" value="Cytidine Deaminase, domain 2"/>
    <property type="match status" value="1"/>
</dbReference>
<dbReference type="InterPro" id="IPR011952">
    <property type="entry name" value="CAP3"/>
</dbReference>
<dbReference type="InterPro" id="IPR028090">
    <property type="entry name" value="JAB_dom_prok"/>
</dbReference>
<dbReference type="NCBIfam" id="TIGR02256">
    <property type="entry name" value="ICE_VC0181"/>
    <property type="match status" value="1"/>
</dbReference>
<dbReference type="Pfam" id="PF14464">
    <property type="entry name" value="Prok-JAB"/>
    <property type="match status" value="1"/>
</dbReference>
<dbReference type="PIRSF" id="PIRSF028170">
    <property type="entry name" value="CHP02256"/>
    <property type="match status" value="1"/>
</dbReference>
<dbReference type="SUPFAM" id="SSF102712">
    <property type="entry name" value="JAB1/MPN domain"/>
    <property type="match status" value="1"/>
</dbReference>
<protein>
    <recommendedName>
        <fullName evidence="9">CD-NTase/cGAS isopeptidase</fullName>
        <ecNumber evidence="4 14">3.4.-.-</ecNumber>
    </recommendedName>
    <alternativeName>
        <fullName evidence="6">CD-NTase-associated protein 3</fullName>
        <shortName evidence="6">Cap3</shortName>
    </alternativeName>
    <alternativeName>
        <fullName evidence="8">Cap3 protease</fullName>
    </alternativeName>
</protein>
<name>CAP3_VIBCH</name>
<sequence length="156" mass="18065">MMSDVELVFKDESDCLVVIMGHVVTRLLSYRQLHHLTPESAGVLIGERRGQHLVVCDISEPGSGDIRQRCRVDRRGVHHQSRVNEAFERSAGTHLYLGEWHTHPEDRPFPSATDRHSWRRNIVSDESMLLLIVGRKDFWLGKKERELITVFKKIES</sequence>
<evidence type="ECO:0000255" key="1">
    <source>
        <dbReference type="PROSITE-ProRule" id="PRU01182"/>
    </source>
</evidence>
<evidence type="ECO:0000269" key="2">
    <source>
    </source>
</evidence>
<evidence type="ECO:0000269" key="3">
    <source>
    </source>
</evidence>
<evidence type="ECO:0000269" key="4">
    <source>
    </source>
</evidence>
<evidence type="ECO:0000269" key="5">
    <source>
    </source>
</evidence>
<evidence type="ECO:0000303" key="6">
    <source>
    </source>
</evidence>
<evidence type="ECO:0000303" key="7">
    <source>
    </source>
</evidence>
<evidence type="ECO:0000303" key="8">
    <source>
    </source>
</evidence>
<evidence type="ECO:0000303" key="9">
    <source>
    </source>
</evidence>
<evidence type="ECO:0000305" key="10"/>
<evidence type="ECO:0000305" key="11">
    <source>
    </source>
</evidence>
<evidence type="ECO:0000305" key="12">
    <source>
    </source>
</evidence>
<evidence type="ECO:0000305" key="13">
    <source>
    </source>
</evidence>
<evidence type="ECO:0000305" key="14">
    <source>
    </source>
</evidence>
<evidence type="ECO:0000312" key="15">
    <source>
        <dbReference type="EMBL" id="AAF93357.1"/>
    </source>
</evidence>
<gene>
    <name evidence="6" type="primary">cap3</name>
    <name evidence="15" type="ordered locus">VC_0181</name>
</gene>
<keyword id="KW-0051">Antiviral defense</keyword>
<keyword id="KW-0378">Hydrolase</keyword>
<keyword id="KW-0479">Metal-binding</keyword>
<keyword id="KW-0482">Metalloprotease</keyword>
<keyword id="KW-0645">Protease</keyword>
<keyword id="KW-1185">Reference proteome</keyword>
<keyword id="KW-0862">Zinc</keyword>
<reference key="1">
    <citation type="journal article" date="2000" name="Nature">
        <title>DNA sequence of both chromosomes of the cholera pathogen Vibrio cholerae.</title>
        <authorList>
            <person name="Heidelberg J.F."/>
            <person name="Eisen J.A."/>
            <person name="Nelson W.C."/>
            <person name="Clayton R.A."/>
            <person name="Gwinn M.L."/>
            <person name="Dodson R.J."/>
            <person name="Haft D.H."/>
            <person name="Hickey E.K."/>
            <person name="Peterson J.D."/>
            <person name="Umayam L.A."/>
            <person name="Gill S.R."/>
            <person name="Nelson K.E."/>
            <person name="Read T.D."/>
            <person name="Tettelin H."/>
            <person name="Richardson D.L."/>
            <person name="Ermolaeva M.D."/>
            <person name="Vamathevan J.J."/>
            <person name="Bass S."/>
            <person name="Qin H."/>
            <person name="Dragoi I."/>
            <person name="Sellers P."/>
            <person name="McDonald L.A."/>
            <person name="Utterback T.R."/>
            <person name="Fleischmann R.D."/>
            <person name="Nierman W.C."/>
            <person name="White O."/>
            <person name="Salzberg S.L."/>
            <person name="Smith H.O."/>
            <person name="Colwell R.R."/>
            <person name="Mekalanos J.J."/>
            <person name="Venter J.C."/>
            <person name="Fraser C.M."/>
        </authorList>
    </citation>
    <scope>NUCLEOTIDE SEQUENCE [LARGE SCALE GENOMIC DNA]</scope>
    <source>
        <strain>ATCC 39315 / El Tor Inaba N16961</strain>
    </source>
</reference>
<reference key="2">
    <citation type="journal article" date="2019" name="Nature">
        <title>Cyclic GMP-AMP signalling protects bacteria against viral infection.</title>
        <authorList>
            <person name="Cohen D."/>
            <person name="Melamed S."/>
            <person name="Millman A."/>
            <person name="Shulman G."/>
            <person name="Oppenheimer-Shaanan Y."/>
            <person name="Kacen A."/>
            <person name="Doron S."/>
            <person name="Amitai G."/>
            <person name="Sorek R."/>
        </authorList>
    </citation>
    <scope>ANTIVIRAL DEFENSE</scope>
    <scope>OPERON STRUCTURE</scope>
    <source>
        <strain>ATCC 39315 / El Tor Inaba N16961</strain>
    </source>
</reference>
<reference key="3">
    <citation type="journal article" date="2020" name="Cell">
        <title>CBASS immunity uses CARF-related effectors to sense 3'-5' and 2'-5'-linked cyclic oligonucleotide signals and protect bacteria from phage infection.</title>
        <authorList>
            <person name="Lowey B."/>
            <person name="Whiteley A.T."/>
            <person name="Keszei A.F.A."/>
            <person name="Morehouse B.R."/>
            <person name="Antine S.P."/>
            <person name="Cabrera V.J."/>
            <person name="Kashin D."/>
            <person name="Schwede F."/>
            <person name="Mekalanos J.J."/>
            <person name="Shao S."/>
            <person name="Lee A.S.Y."/>
            <person name="Kranzusch P.J."/>
        </authorList>
    </citation>
    <scope>ANTIVIRAL DEFENSE</scope>
    <scope>NOMENCLATURE</scope>
    <scope>OPERON STRUCTURE</scope>
    <source>
        <strain>El Tor C6706</strain>
    </source>
</reference>
<reference key="4">
    <citation type="journal article" date="2020" name="Nat. Microbiol.">
        <title>Diversity and classification of cyclic-oligonucleotide-based anti-phage signalling systems.</title>
        <authorList>
            <person name="Millman A."/>
            <person name="Melamed S."/>
            <person name="Amitai G."/>
            <person name="Sorek R."/>
        </authorList>
    </citation>
    <scope>CLASSIFICATION AND NOMENCLATURE</scope>
</reference>
<reference key="5">
    <citation type="journal article" date="2023" name="Nature">
        <title>An E1-E2 fusion protein primes antiviral immune signalling in bacteria.</title>
        <authorList>
            <person name="Ledvina H.E."/>
            <person name="Ye Q."/>
            <person name="Gu Y."/>
            <person name="Sullivan A.E."/>
            <person name="Quan Y."/>
            <person name="Lau R.K."/>
            <person name="Zhou H."/>
            <person name="Corbett K.D."/>
            <person name="Whiteley A.T."/>
        </authorList>
    </citation>
    <scope>ANTIVIRAL DEFENSE</scope>
    <scope>FUNCTION</scope>
    <scope>ACTIVITY REGULATION</scope>
    <scope>COFACTOR</scope>
    <scope>DISRUPTION PHENOTYPE</scope>
    <scope>MUTAGENESIS OF 101-HIS--HIS-103</scope>
    <source>
        <strain>El Tor C6706</strain>
    </source>
</reference>
<reference key="6">
    <citation type="journal article" date="2023" name="Nature">
        <title>Ubiquitin-like conjugation by bacterial cGAS enhances anti-phage defence.</title>
        <authorList>
            <person name="Jenson J.M."/>
            <person name="Li T."/>
            <person name="Du F."/>
            <person name="Ea C.K."/>
            <person name="Chen Z.J."/>
        </authorList>
    </citation>
    <scope>FUNCTION</scope>
    <scope>MUTAGENESIS OF GLU-39</scope>
    <source>
        <strain>El Tor C6706</strain>
    </source>
</reference>
<comment type="function">
    <text evidence="2 3 4 7">Metalloprotease priming reversal component of a CBASS system (PubMed:36755092). CBASS (cyclic oligonucleotide-based antiphage signaling system) provides immunity against bacteriophages. The CD-NTase protein (DncV) synthesizes cyclic nucleotides in response to infection; these serve as specific second messenger signals. The signals activate a diverse range of effectors, leading to bacterial cell death and thus abortive phage infection (PubMed:31533127, PubMed:32544385, PubMed:36755092). A type II-A(GA) CBASS system (PubMed:32839535).</text>
</comment>
<comment type="function">
    <text evidence="4 5">Reverses the primed state of DncV, the CD-NTase (PubMed:36755092, PubMed:36848932). Cleaves a DncV-GFP (green fluorescent protein) fusion protein precisely at the C-terminus of DncV (PubMed:36755092). Overexpression decreases the efficacy of CBASS protection against phages T2, T4, T5 and T6, blocks formation of DncV-conjugates in vivo, and inhibits in vivo activation of DncV (PubMed:36755092). Antagonism of phage defense upon overexpression is CBASS-system specific, Cap3 from this bacteria only antagonizes its cognate CBASS system and not that of C.freundii, E.coli or E.hormaechei (PubMed:36755092).</text>
</comment>
<comment type="function">
    <text evidence="2 3 4 5">Protects E.coli against phage infection. When the CBASS operon (capV-dncV-cap2-cap3) is introduced in E.coli MG1655 there is about 100-fold protection against phages P1 and T2 (PubMed:31533127). When the operon is introduced in E.coli MG1655 there is a more than 10(3) decrease in the efficiency of T2 plaque formation. Protects 100-fold against phage T5, offers no protection against T7 (PubMed:32544385). When the operon is introduced in E.coli MG1655 it protects against phages T2, T4, T5 and T6 (PubMed:36755092). Another paper shows the operon confers protection against phages P1, T2, T5 and T6 but not T4 or lambda (PubMed:36848932).</text>
</comment>
<comment type="cofactor">
    <cofactor evidence="13">
        <name>Zn(2+)</name>
        <dbReference type="ChEBI" id="CHEBI:29105"/>
    </cofactor>
</comment>
<comment type="activity regulation">
    <text evidence="4">Cleavage of conjugated proteins is inhibited by EDTA (PubMed:36755092).</text>
</comment>
<comment type="induction">
    <text evidence="11 12">Part of a CBASS operon consisting of capV-dncV-cap2-cap3.</text>
</comment>
<comment type="disruption phenotype">
    <text evidence="4 5">Not essential for CBASS function; when the operon missing this gene is introduced in E.coli it still protects against phages T2, T4, T5 and T6 (PubMed:36755092). Another paper shows the operon confers protection against phages P1, T2, T5 and T6 but not T4 or lambda (PubMed:36848932).</text>
</comment>
<comment type="similarity">
    <text evidence="10">Belongs to the peptidase M67B family. Cap3 isopeptidase subfamily.</text>
</comment>